<gene>
    <name type="primary">mrpl37</name>
    <name type="ORF">SPCC645.09</name>
</gene>
<proteinExistence type="inferred from homology"/>
<name>RM37_SCHPO</name>
<protein>
    <recommendedName>
        <fullName evidence="4">Large ribosomal subunit protein mL54</fullName>
    </recommendedName>
    <alternativeName>
        <fullName>54S ribosomal protein L37, mitochondrial</fullName>
    </alternativeName>
</protein>
<accession>Q9Y7U8</accession>
<comment type="function">
    <text evidence="1">Component of the mitochondrial ribosome (mitoribosome), a dedicated translation machinery responsible for the synthesis of mitochondrial genome-encoded proteins, including at least some of the essential transmembrane subunits of the mitochondrial respiratory chain. The mitoribosomes are attached to the mitochondrial inner membrane and translation products are cotranslationally integrated into the membrane. mL54 may have a meiosis-specific role as it accumulates during the middle stage of sporulation.</text>
</comment>
<comment type="subunit">
    <text evidence="1">Component of the mitochondrial large ribosomal subunit (mt-LSU). Mature yeast 74S mitochondrial ribosomes consist of a small (37S) and a large (54S) subunit. The 37S small subunit contains a 15S ribosomal RNA (15S mt-rRNA) and at least 32 different proteins. The 54S large subunit contains a 21S rRNA (21S mt-rRNA) and at least 45 different proteins.</text>
</comment>
<comment type="subcellular location">
    <subcellularLocation>
        <location evidence="3">Mitochondrion</location>
    </subcellularLocation>
</comment>
<comment type="similarity">
    <text evidence="4">Belongs to the mitochondrion-specific ribosomal protein mL54 family.</text>
</comment>
<reference key="1">
    <citation type="journal article" date="2002" name="Nature">
        <title>The genome sequence of Schizosaccharomyces pombe.</title>
        <authorList>
            <person name="Wood V."/>
            <person name="Gwilliam R."/>
            <person name="Rajandream M.A."/>
            <person name="Lyne M.H."/>
            <person name="Lyne R."/>
            <person name="Stewart A."/>
            <person name="Sgouros J.G."/>
            <person name="Peat N."/>
            <person name="Hayles J."/>
            <person name="Baker S.G."/>
            <person name="Basham D."/>
            <person name="Bowman S."/>
            <person name="Brooks K."/>
            <person name="Brown D."/>
            <person name="Brown S."/>
            <person name="Chillingworth T."/>
            <person name="Churcher C.M."/>
            <person name="Collins M."/>
            <person name="Connor R."/>
            <person name="Cronin A."/>
            <person name="Davis P."/>
            <person name="Feltwell T."/>
            <person name="Fraser A."/>
            <person name="Gentles S."/>
            <person name="Goble A."/>
            <person name="Hamlin N."/>
            <person name="Harris D.E."/>
            <person name="Hidalgo J."/>
            <person name="Hodgson G."/>
            <person name="Holroyd S."/>
            <person name="Hornsby T."/>
            <person name="Howarth S."/>
            <person name="Huckle E.J."/>
            <person name="Hunt S."/>
            <person name="Jagels K."/>
            <person name="James K.D."/>
            <person name="Jones L."/>
            <person name="Jones M."/>
            <person name="Leather S."/>
            <person name="McDonald S."/>
            <person name="McLean J."/>
            <person name="Mooney P."/>
            <person name="Moule S."/>
            <person name="Mungall K.L."/>
            <person name="Murphy L.D."/>
            <person name="Niblett D."/>
            <person name="Odell C."/>
            <person name="Oliver K."/>
            <person name="O'Neil S."/>
            <person name="Pearson D."/>
            <person name="Quail M.A."/>
            <person name="Rabbinowitsch E."/>
            <person name="Rutherford K.M."/>
            <person name="Rutter S."/>
            <person name="Saunders D."/>
            <person name="Seeger K."/>
            <person name="Sharp S."/>
            <person name="Skelton J."/>
            <person name="Simmonds M.N."/>
            <person name="Squares R."/>
            <person name="Squares S."/>
            <person name="Stevens K."/>
            <person name="Taylor K."/>
            <person name="Taylor R.G."/>
            <person name="Tivey A."/>
            <person name="Walsh S.V."/>
            <person name="Warren T."/>
            <person name="Whitehead S."/>
            <person name="Woodward J.R."/>
            <person name="Volckaert G."/>
            <person name="Aert R."/>
            <person name="Robben J."/>
            <person name="Grymonprez B."/>
            <person name="Weltjens I."/>
            <person name="Vanstreels E."/>
            <person name="Rieger M."/>
            <person name="Schaefer M."/>
            <person name="Mueller-Auer S."/>
            <person name="Gabel C."/>
            <person name="Fuchs M."/>
            <person name="Duesterhoeft A."/>
            <person name="Fritzc C."/>
            <person name="Holzer E."/>
            <person name="Moestl D."/>
            <person name="Hilbert H."/>
            <person name="Borzym K."/>
            <person name="Langer I."/>
            <person name="Beck A."/>
            <person name="Lehrach H."/>
            <person name="Reinhardt R."/>
            <person name="Pohl T.M."/>
            <person name="Eger P."/>
            <person name="Zimmermann W."/>
            <person name="Wedler H."/>
            <person name="Wambutt R."/>
            <person name="Purnelle B."/>
            <person name="Goffeau A."/>
            <person name="Cadieu E."/>
            <person name="Dreano S."/>
            <person name="Gloux S."/>
            <person name="Lelaure V."/>
            <person name="Mottier S."/>
            <person name="Galibert F."/>
            <person name="Aves S.J."/>
            <person name="Xiang Z."/>
            <person name="Hunt C."/>
            <person name="Moore K."/>
            <person name="Hurst S.M."/>
            <person name="Lucas M."/>
            <person name="Rochet M."/>
            <person name="Gaillardin C."/>
            <person name="Tallada V.A."/>
            <person name="Garzon A."/>
            <person name="Thode G."/>
            <person name="Daga R.R."/>
            <person name="Cruzado L."/>
            <person name="Jimenez J."/>
            <person name="Sanchez M."/>
            <person name="del Rey F."/>
            <person name="Benito J."/>
            <person name="Dominguez A."/>
            <person name="Revuelta J.L."/>
            <person name="Moreno S."/>
            <person name="Armstrong J."/>
            <person name="Forsburg S.L."/>
            <person name="Cerutti L."/>
            <person name="Lowe T."/>
            <person name="McCombie W.R."/>
            <person name="Paulsen I."/>
            <person name="Potashkin J."/>
            <person name="Shpakovski G.V."/>
            <person name="Ussery D."/>
            <person name="Barrell B.G."/>
            <person name="Nurse P."/>
        </authorList>
    </citation>
    <scope>NUCLEOTIDE SEQUENCE [LARGE SCALE GENOMIC DNA]</scope>
    <source>
        <strain>972 / ATCC 24843</strain>
    </source>
</reference>
<reference key="2">
    <citation type="journal article" date="2006" name="Nat. Biotechnol.">
        <title>ORFeome cloning and global analysis of protein localization in the fission yeast Schizosaccharomyces pombe.</title>
        <authorList>
            <person name="Matsuyama A."/>
            <person name="Arai R."/>
            <person name="Yashiroda Y."/>
            <person name="Shirai A."/>
            <person name="Kamata A."/>
            <person name="Sekido S."/>
            <person name="Kobayashi Y."/>
            <person name="Hashimoto A."/>
            <person name="Hamamoto M."/>
            <person name="Hiraoka Y."/>
            <person name="Horinouchi S."/>
            <person name="Yoshida M."/>
        </authorList>
    </citation>
    <scope>SUBCELLULAR LOCATION [LARGE SCALE ANALYSIS]</scope>
</reference>
<sequence length="139" mass="15184">MPFIESMAPLSRAITRGISQFSCYSNTLVLRSSRNSSSSLVKRSYVSSRVSPKKPQHNSDATSSAQKVANKTHTSSVLPGTILKGLCIKAGGVDPVAREDHEYPEWLWSLLDEPAPNSKTARSHARKSAIRAANFLTKK</sequence>
<organism>
    <name type="scientific">Schizosaccharomyces pombe (strain 972 / ATCC 24843)</name>
    <name type="common">Fission yeast</name>
    <dbReference type="NCBI Taxonomy" id="284812"/>
    <lineage>
        <taxon>Eukaryota</taxon>
        <taxon>Fungi</taxon>
        <taxon>Dikarya</taxon>
        <taxon>Ascomycota</taxon>
        <taxon>Taphrinomycotina</taxon>
        <taxon>Schizosaccharomycetes</taxon>
        <taxon>Schizosaccharomycetales</taxon>
        <taxon>Schizosaccharomycetaceae</taxon>
        <taxon>Schizosaccharomyces</taxon>
    </lineage>
</organism>
<keyword id="KW-0496">Mitochondrion</keyword>
<keyword id="KW-1185">Reference proteome</keyword>
<keyword id="KW-0687">Ribonucleoprotein</keyword>
<keyword id="KW-0689">Ribosomal protein</keyword>
<keyword id="KW-0809">Transit peptide</keyword>
<feature type="transit peptide" description="Mitochondrion">
    <location>
        <begin position="1"/>
        <end position="50"/>
    </location>
</feature>
<feature type="chain" id="PRO_0000339142" description="Large ribosomal subunit protein mL54">
    <location>
        <begin position="51"/>
        <end position="139"/>
    </location>
</feature>
<feature type="region of interest" description="Disordered" evidence="2">
    <location>
        <begin position="35"/>
        <end position="74"/>
    </location>
</feature>
<feature type="compositionally biased region" description="Low complexity" evidence="2">
    <location>
        <begin position="35"/>
        <end position="50"/>
    </location>
</feature>
<feature type="compositionally biased region" description="Polar residues" evidence="2">
    <location>
        <begin position="58"/>
        <end position="74"/>
    </location>
</feature>
<evidence type="ECO:0000250" key="1">
    <source>
        <dbReference type="UniProtKB" id="P36532"/>
    </source>
</evidence>
<evidence type="ECO:0000256" key="2">
    <source>
        <dbReference type="SAM" id="MobiDB-lite"/>
    </source>
</evidence>
<evidence type="ECO:0000269" key="3">
    <source>
    </source>
</evidence>
<evidence type="ECO:0000305" key="4"/>
<dbReference type="EMBL" id="CU329672">
    <property type="protein sequence ID" value="CAB39905.1"/>
    <property type="molecule type" value="Genomic_DNA"/>
</dbReference>
<dbReference type="PIR" id="T41526">
    <property type="entry name" value="T41526"/>
</dbReference>
<dbReference type="RefSeq" id="NP_588118.1">
    <property type="nucleotide sequence ID" value="NM_001023108.2"/>
</dbReference>
<dbReference type="ComplexPortal" id="CPX-10323">
    <property type="entry name" value="54S mitochondrial large ribosomal subunit"/>
</dbReference>
<dbReference type="FunCoup" id="Q9Y7U8">
    <property type="interactions" value="44"/>
</dbReference>
<dbReference type="STRING" id="284812.Q9Y7U8"/>
<dbReference type="iPTMnet" id="Q9Y7U8"/>
<dbReference type="PaxDb" id="4896-SPCC645.09.1"/>
<dbReference type="EnsemblFungi" id="SPCC645.09.1">
    <property type="protein sequence ID" value="SPCC645.09.1:pep"/>
    <property type="gene ID" value="SPCC645.09"/>
</dbReference>
<dbReference type="GeneID" id="2539589"/>
<dbReference type="KEGG" id="spo:2539589"/>
<dbReference type="PomBase" id="SPCC645.09">
    <property type="gene designation" value="mrpl37"/>
</dbReference>
<dbReference type="VEuPathDB" id="FungiDB:SPCC645.09"/>
<dbReference type="eggNOG" id="KOG3435">
    <property type="taxonomic scope" value="Eukaryota"/>
</dbReference>
<dbReference type="HOGENOM" id="CLU_144297_2_0_1"/>
<dbReference type="InParanoid" id="Q9Y7U8"/>
<dbReference type="OMA" id="REDHEYP"/>
<dbReference type="PRO" id="PR:Q9Y7U8"/>
<dbReference type="Proteomes" id="UP000002485">
    <property type="component" value="Chromosome III"/>
</dbReference>
<dbReference type="GO" id="GO:0005762">
    <property type="term" value="C:mitochondrial large ribosomal subunit"/>
    <property type="evidence" value="ECO:0000318"/>
    <property type="project" value="GO_Central"/>
</dbReference>
<dbReference type="GO" id="GO:0005739">
    <property type="term" value="C:mitochondrion"/>
    <property type="evidence" value="ECO:0007005"/>
    <property type="project" value="PomBase"/>
</dbReference>
<dbReference type="GO" id="GO:0003735">
    <property type="term" value="F:structural constituent of ribosome"/>
    <property type="evidence" value="ECO:0000318"/>
    <property type="project" value="GO_Central"/>
</dbReference>
<dbReference type="GO" id="GO:0032543">
    <property type="term" value="P:mitochondrial translation"/>
    <property type="evidence" value="ECO:0000250"/>
    <property type="project" value="PomBase"/>
</dbReference>
<dbReference type="InterPro" id="IPR013870">
    <property type="entry name" value="Ribosomal_mL54"/>
</dbReference>
<dbReference type="PANTHER" id="PTHR28595">
    <property type="entry name" value="39S RIBOSOMAL PROTEIN L54, MITOCHONDRIAL"/>
    <property type="match status" value="1"/>
</dbReference>
<dbReference type="PANTHER" id="PTHR28595:SF1">
    <property type="entry name" value="LARGE RIBOSOMAL SUBUNIT PROTEIN ML54"/>
    <property type="match status" value="1"/>
</dbReference>
<dbReference type="Pfam" id="PF08561">
    <property type="entry name" value="Ribosomal_L37"/>
    <property type="match status" value="1"/>
</dbReference>